<keyword id="KW-0175">Coiled coil</keyword>
<keyword id="KW-0963">Cytoplasm</keyword>
<keyword id="KW-0206">Cytoskeleton</keyword>
<keyword id="KW-1185">Reference proteome</keyword>
<comment type="function">
    <text evidence="3">Microtubule-associated protein probably involved in the regulation of microtubule organization.</text>
</comment>
<comment type="subcellular location">
    <subcellularLocation>
        <location evidence="3">Cytoplasm</location>
        <location evidence="3">Cytoskeleton</location>
    </subcellularLocation>
    <text evidence="3">Colocalizes with cortical microtubules and binds directly to microtubules.</text>
</comment>
<comment type="similarity">
    <text evidence="5">Belongs to the IPGA1 family.</text>
</comment>
<comment type="sequence caution" evidence="5">
    <conflict type="erroneous initiation">
        <sequence resource="EMBL-CDS" id="AAL10493"/>
    </conflict>
    <text>Truncated N-terminus.</text>
</comment>
<evidence type="ECO:0000255" key="1"/>
<evidence type="ECO:0000256" key="2">
    <source>
        <dbReference type="SAM" id="MobiDB-lite"/>
    </source>
</evidence>
<evidence type="ECO:0000269" key="3">
    <source>
    </source>
</evidence>
<evidence type="ECO:0000303" key="4">
    <source>
    </source>
</evidence>
<evidence type="ECO:0000305" key="5"/>
<evidence type="ECO:0000312" key="6">
    <source>
        <dbReference type="Araport" id="AT1G48280"/>
    </source>
</evidence>
<evidence type="ECO:0000312" key="7">
    <source>
        <dbReference type="EMBL" id="AAD49768.2"/>
    </source>
</evidence>
<gene>
    <name evidence="4" type="primary">IPGAL2</name>
    <name evidence="6" type="ordered locus">At1g48280</name>
    <name evidence="7" type="ORF">F11A17.16</name>
</gene>
<accession>Q9SX62</accession>
<accession>Q93ZL7</accession>
<dbReference type="EMBL" id="AC007932">
    <property type="protein sequence ID" value="AAD49768.2"/>
    <property type="molecule type" value="Genomic_DNA"/>
</dbReference>
<dbReference type="EMBL" id="CP002684">
    <property type="protein sequence ID" value="AEE32271.1"/>
    <property type="molecule type" value="Genomic_DNA"/>
</dbReference>
<dbReference type="EMBL" id="AY056802">
    <property type="protein sequence ID" value="AAL10493.1"/>
    <property type="status" value="ALT_INIT"/>
    <property type="molecule type" value="mRNA"/>
</dbReference>
<dbReference type="EMBL" id="AY090383">
    <property type="protein sequence ID" value="AAL91285.1"/>
    <property type="molecule type" value="mRNA"/>
</dbReference>
<dbReference type="PIR" id="G96522">
    <property type="entry name" value="G96522"/>
</dbReference>
<dbReference type="RefSeq" id="NP_564524.1">
    <property type="nucleotide sequence ID" value="NM_103725.3"/>
</dbReference>
<dbReference type="SMR" id="Q9SX62"/>
<dbReference type="FunCoup" id="Q9SX62">
    <property type="interactions" value="149"/>
</dbReference>
<dbReference type="IntAct" id="Q9SX62">
    <property type="interactions" value="4"/>
</dbReference>
<dbReference type="STRING" id="3702.Q9SX62"/>
<dbReference type="GlyGen" id="Q9SX62">
    <property type="glycosylation" value="1 site"/>
</dbReference>
<dbReference type="iPTMnet" id="Q9SX62"/>
<dbReference type="PaxDb" id="3702-AT1G48280.1"/>
<dbReference type="ProteomicsDB" id="179642"/>
<dbReference type="EnsemblPlants" id="AT1G48280.1">
    <property type="protein sequence ID" value="AT1G48280.1"/>
    <property type="gene ID" value="AT1G48280"/>
</dbReference>
<dbReference type="GeneID" id="841248"/>
<dbReference type="Gramene" id="AT1G48280.1">
    <property type="protein sequence ID" value="AT1G48280.1"/>
    <property type="gene ID" value="AT1G48280"/>
</dbReference>
<dbReference type="KEGG" id="ath:AT1G48280"/>
<dbReference type="Araport" id="AT1G48280"/>
<dbReference type="TAIR" id="AT1G48280">
    <property type="gene designation" value="IPGAL2"/>
</dbReference>
<dbReference type="eggNOG" id="ENOG502QVIT">
    <property type="taxonomic scope" value="Eukaryota"/>
</dbReference>
<dbReference type="HOGENOM" id="CLU_014032_1_0_1"/>
<dbReference type="OMA" id="YQSPKFK"/>
<dbReference type="PRO" id="PR:Q9SX62"/>
<dbReference type="Proteomes" id="UP000006548">
    <property type="component" value="Chromosome 1"/>
</dbReference>
<dbReference type="ExpressionAtlas" id="Q9SX62">
    <property type="expression patterns" value="baseline and differential"/>
</dbReference>
<dbReference type="GO" id="GO:0055028">
    <property type="term" value="C:cortical microtubule"/>
    <property type="evidence" value="ECO:0000314"/>
    <property type="project" value="UniProtKB"/>
</dbReference>
<dbReference type="GO" id="GO:0008017">
    <property type="term" value="F:microtubule binding"/>
    <property type="evidence" value="ECO:0000314"/>
    <property type="project" value="UniProtKB"/>
</dbReference>
<dbReference type="InterPro" id="IPR040265">
    <property type="entry name" value="CHUP1/IPGA1-like"/>
</dbReference>
<dbReference type="PANTHER" id="PTHR31342:SF43">
    <property type="entry name" value="F11A17.16"/>
    <property type="match status" value="1"/>
</dbReference>
<dbReference type="PANTHER" id="PTHR31342">
    <property type="entry name" value="PROTEIN CHUP1, CHLOROPLASTIC"/>
    <property type="match status" value="1"/>
</dbReference>
<dbReference type="SUPFAM" id="SSF101447">
    <property type="entry name" value="Formin homology 2 domain (FH2 domain)"/>
    <property type="match status" value="1"/>
</dbReference>
<proteinExistence type="evidence at transcript level"/>
<name>IPGL2_ARATH</name>
<protein>
    <recommendedName>
        <fullName evidence="4">INCREASED PETAL GROWTH ANISOTROPY 1-like protein 2</fullName>
        <shortName evidence="4">IPGA1-like protein 2</shortName>
    </recommendedName>
</protein>
<organism>
    <name type="scientific">Arabidopsis thaliana</name>
    <name type="common">Mouse-ear cress</name>
    <dbReference type="NCBI Taxonomy" id="3702"/>
    <lineage>
        <taxon>Eukaryota</taxon>
        <taxon>Viridiplantae</taxon>
        <taxon>Streptophyta</taxon>
        <taxon>Embryophyta</taxon>
        <taxon>Tracheophyta</taxon>
        <taxon>Spermatophyta</taxon>
        <taxon>Magnoliopsida</taxon>
        <taxon>eudicotyledons</taxon>
        <taxon>Gunneridae</taxon>
        <taxon>Pentapetalae</taxon>
        <taxon>rosids</taxon>
        <taxon>malvids</taxon>
        <taxon>Brassicales</taxon>
        <taxon>Brassicaceae</taxon>
        <taxon>Camelineae</taxon>
        <taxon>Arabidopsis</taxon>
    </lineage>
</organism>
<reference key="1">
    <citation type="journal article" date="2000" name="Nature">
        <title>Sequence and analysis of chromosome 1 of the plant Arabidopsis thaliana.</title>
        <authorList>
            <person name="Theologis A."/>
            <person name="Ecker J.R."/>
            <person name="Palm C.J."/>
            <person name="Federspiel N.A."/>
            <person name="Kaul S."/>
            <person name="White O."/>
            <person name="Alonso J."/>
            <person name="Altafi H."/>
            <person name="Araujo R."/>
            <person name="Bowman C.L."/>
            <person name="Brooks S.Y."/>
            <person name="Buehler E."/>
            <person name="Chan A."/>
            <person name="Chao Q."/>
            <person name="Chen H."/>
            <person name="Cheuk R.F."/>
            <person name="Chin C.W."/>
            <person name="Chung M.K."/>
            <person name="Conn L."/>
            <person name="Conway A.B."/>
            <person name="Conway A.R."/>
            <person name="Creasy T.H."/>
            <person name="Dewar K."/>
            <person name="Dunn P."/>
            <person name="Etgu P."/>
            <person name="Feldblyum T.V."/>
            <person name="Feng J.-D."/>
            <person name="Fong B."/>
            <person name="Fujii C.Y."/>
            <person name="Gill J.E."/>
            <person name="Goldsmith A.D."/>
            <person name="Haas B."/>
            <person name="Hansen N.F."/>
            <person name="Hughes B."/>
            <person name="Huizar L."/>
            <person name="Hunter J.L."/>
            <person name="Jenkins J."/>
            <person name="Johnson-Hopson C."/>
            <person name="Khan S."/>
            <person name="Khaykin E."/>
            <person name="Kim C.J."/>
            <person name="Koo H.L."/>
            <person name="Kremenetskaia I."/>
            <person name="Kurtz D.B."/>
            <person name="Kwan A."/>
            <person name="Lam B."/>
            <person name="Langin-Hooper S."/>
            <person name="Lee A."/>
            <person name="Lee J.M."/>
            <person name="Lenz C.A."/>
            <person name="Li J.H."/>
            <person name="Li Y.-P."/>
            <person name="Lin X."/>
            <person name="Liu S.X."/>
            <person name="Liu Z.A."/>
            <person name="Luros J.S."/>
            <person name="Maiti R."/>
            <person name="Marziali A."/>
            <person name="Militscher J."/>
            <person name="Miranda M."/>
            <person name="Nguyen M."/>
            <person name="Nierman W.C."/>
            <person name="Osborne B.I."/>
            <person name="Pai G."/>
            <person name="Peterson J."/>
            <person name="Pham P.K."/>
            <person name="Rizzo M."/>
            <person name="Rooney T."/>
            <person name="Rowley D."/>
            <person name="Sakano H."/>
            <person name="Salzberg S.L."/>
            <person name="Schwartz J.R."/>
            <person name="Shinn P."/>
            <person name="Southwick A.M."/>
            <person name="Sun H."/>
            <person name="Tallon L.J."/>
            <person name="Tambunga G."/>
            <person name="Toriumi M.J."/>
            <person name="Town C.D."/>
            <person name="Utterback T."/>
            <person name="Van Aken S."/>
            <person name="Vaysberg M."/>
            <person name="Vysotskaia V.S."/>
            <person name="Walker M."/>
            <person name="Wu D."/>
            <person name="Yu G."/>
            <person name="Fraser C.M."/>
            <person name="Venter J.C."/>
            <person name="Davis R.W."/>
        </authorList>
    </citation>
    <scope>NUCLEOTIDE SEQUENCE [LARGE SCALE GENOMIC DNA]</scope>
    <source>
        <strain>cv. Columbia</strain>
    </source>
</reference>
<reference key="2">
    <citation type="journal article" date="2017" name="Plant J.">
        <title>Araport11: a complete reannotation of the Arabidopsis thaliana reference genome.</title>
        <authorList>
            <person name="Cheng C.Y."/>
            <person name="Krishnakumar V."/>
            <person name="Chan A.P."/>
            <person name="Thibaud-Nissen F."/>
            <person name="Schobel S."/>
            <person name="Town C.D."/>
        </authorList>
    </citation>
    <scope>GENOME REANNOTATION</scope>
    <source>
        <strain>cv. Columbia</strain>
    </source>
</reference>
<reference key="3">
    <citation type="journal article" date="2003" name="Science">
        <title>Empirical analysis of transcriptional activity in the Arabidopsis genome.</title>
        <authorList>
            <person name="Yamada K."/>
            <person name="Lim J."/>
            <person name="Dale J.M."/>
            <person name="Chen H."/>
            <person name="Shinn P."/>
            <person name="Palm C.J."/>
            <person name="Southwick A.M."/>
            <person name="Wu H.C."/>
            <person name="Kim C.J."/>
            <person name="Nguyen M."/>
            <person name="Pham P.K."/>
            <person name="Cheuk R.F."/>
            <person name="Karlin-Newmann G."/>
            <person name="Liu S.X."/>
            <person name="Lam B."/>
            <person name="Sakano H."/>
            <person name="Wu T."/>
            <person name="Yu G."/>
            <person name="Miranda M."/>
            <person name="Quach H.L."/>
            <person name="Tripp M."/>
            <person name="Chang C.H."/>
            <person name="Lee J.M."/>
            <person name="Toriumi M.J."/>
            <person name="Chan M.M."/>
            <person name="Tang C.C."/>
            <person name="Onodera C.S."/>
            <person name="Deng J.M."/>
            <person name="Akiyama K."/>
            <person name="Ansari Y."/>
            <person name="Arakawa T."/>
            <person name="Banh J."/>
            <person name="Banno F."/>
            <person name="Bowser L."/>
            <person name="Brooks S.Y."/>
            <person name="Carninci P."/>
            <person name="Chao Q."/>
            <person name="Choy N."/>
            <person name="Enju A."/>
            <person name="Goldsmith A.D."/>
            <person name="Gurjal M."/>
            <person name="Hansen N.F."/>
            <person name="Hayashizaki Y."/>
            <person name="Johnson-Hopson C."/>
            <person name="Hsuan V.W."/>
            <person name="Iida K."/>
            <person name="Karnes M."/>
            <person name="Khan S."/>
            <person name="Koesema E."/>
            <person name="Ishida J."/>
            <person name="Jiang P.X."/>
            <person name="Jones T."/>
            <person name="Kawai J."/>
            <person name="Kamiya A."/>
            <person name="Meyers C."/>
            <person name="Nakajima M."/>
            <person name="Narusaka M."/>
            <person name="Seki M."/>
            <person name="Sakurai T."/>
            <person name="Satou M."/>
            <person name="Tamse R."/>
            <person name="Vaysberg M."/>
            <person name="Wallender E.K."/>
            <person name="Wong C."/>
            <person name="Yamamura Y."/>
            <person name="Yuan S."/>
            <person name="Shinozaki K."/>
            <person name="Davis R.W."/>
            <person name="Theologis A."/>
            <person name="Ecker J.R."/>
        </authorList>
    </citation>
    <scope>NUCLEOTIDE SEQUENCE [LARGE SCALE MRNA] OF 138-558</scope>
    <source>
        <strain>cv. Columbia</strain>
    </source>
</reference>
<reference key="4">
    <citation type="journal article" date="2019" name="J. Exp. Bot.">
        <title>Arabidopsis IPGA1 is a microtubule-associated protein essential for cell expansion during petal morphogenesis.</title>
        <authorList>
            <person name="Yang Y."/>
            <person name="Chen B."/>
            <person name="Dang X."/>
            <person name="Zhu L."/>
            <person name="Rao J."/>
            <person name="Ren H."/>
            <person name="Lin C."/>
            <person name="Qin Y."/>
            <person name="Lin D."/>
        </authorList>
    </citation>
    <scope>FUNCTION</scope>
    <scope>SUBCELLULAR LOCATION</scope>
    <source>
        <strain>cv. Columbia</strain>
    </source>
</reference>
<feature type="chain" id="PRO_0000458668" description="INCREASED PETAL GROWTH ANISOTROPY 1-like protein 2">
    <location>
        <begin position="1"/>
        <end position="558"/>
    </location>
</feature>
<feature type="region of interest" description="Disordered" evidence="2">
    <location>
        <begin position="1"/>
        <end position="54"/>
    </location>
</feature>
<feature type="region of interest" description="Disordered" evidence="2">
    <location>
        <begin position="207"/>
        <end position="285"/>
    </location>
</feature>
<feature type="coiled-coil region" evidence="1">
    <location>
        <begin position="104"/>
        <end position="180"/>
    </location>
</feature>
<feature type="coiled-coil region" evidence="1">
    <location>
        <begin position="392"/>
        <end position="448"/>
    </location>
</feature>
<feature type="compositionally biased region" description="Low complexity" evidence="2">
    <location>
        <begin position="1"/>
        <end position="15"/>
    </location>
</feature>
<feature type="compositionally biased region" description="Pro residues" evidence="2">
    <location>
        <begin position="221"/>
        <end position="236"/>
    </location>
</feature>
<feature type="compositionally biased region" description="Pro residues" evidence="2">
    <location>
        <begin position="256"/>
        <end position="272"/>
    </location>
</feature>
<sequence>MSRISTTSTTPSRVRAANSHYSVISKPRAQDDNGLTGGKPKSSGYDVKNDPAKRRSILLKRAKSAEEEMAVLAPQRARSVNRPAVVEQFGCPRRPISRKSEETVMATAAAEDEKRKRMEELEEKLVVNESLIKDLQLQVLNLKTELEEARNSNVELELNNRKLSQDLVSAEAKISSLSSNDKPAKEHQNSRFKDIQRLIASKLEQPKVKKEVAVESSRLSPPSPSPSRLPPTPPLPKFLVSPASSLGKRDENSSPFAPPTPPPPPPPPPPRPLAKAARAQKSPPVSQLFQLLNKQDNSRNLSQSVNGNKSQVNSAHNSIVGEIQNRSAHLIAIKADIETKGEFINDLIQKVLTTCFSDMEDVMKFVDWLDKELATLADERAVLKHFKWPEKKADTLQEAAVEYRELKKLEKELSSYSDDPNIHYGVALKKMANLLDKSEQRIRRLVRLRGSSMRSYQDFKIPVEWMLDSGMICKIKRASIKLAKTYMNRVANELQSARNLDRESTKEALLLQGVRFAYRTHQFAGGLDPETLCALEEIKQRVPSHLRLARGNMAGNLS</sequence>